<comment type="subcellular location">
    <subcellularLocation>
        <location evidence="1">Secreted</location>
    </subcellularLocation>
</comment>
<comment type="tissue specificity">
    <text>Expressed by the venom duct.</text>
</comment>
<comment type="domain">
    <text evidence="1">The presence of a 'disulfide through disulfide knot' structurally defines this protein as a knottin.</text>
</comment>
<comment type="domain">
    <text>The cysteine framework is VI/VII (C-C-CC-C-C).</text>
</comment>
<comment type="similarity">
    <text evidence="3">Belongs to the conotoxin O1 superfamily.</text>
</comment>
<sequence length="72" mass="7856">MKLTCVVIVAVLLLTACQLITADDSRGTQEHRALRSDTKLSMLTLRCESYGKPCGIYNDCCNACDPAKKTCT</sequence>
<reference key="1">
    <citation type="journal article" date="2005" name="Peptides">
        <title>Direct cDNA cloning of novel conopeptide precursors of the O-superfamily.</title>
        <authorList>
            <person name="Kauferstein S."/>
            <person name="Melaun C."/>
            <person name="Mebs D."/>
        </authorList>
    </citation>
    <scope>NUCLEOTIDE SEQUENCE [MRNA]</scope>
    <source>
        <tissue>Venom duct</tissue>
    </source>
</reference>
<reference key="2">
    <citation type="journal article" date="2006" name="Biochimie">
        <title>Analysis of expressed sequence tags from the venom ducts of Conus striatus: focusing on the expression profile of conotoxins.</title>
        <authorList>
            <person name="Pi C."/>
            <person name="Liu Y."/>
            <person name="Peng C."/>
            <person name="Jiang X."/>
            <person name="Liu J."/>
            <person name="Xu B."/>
            <person name="Yu X."/>
            <person name="Yu Y."/>
            <person name="Jiang X."/>
            <person name="Wang L."/>
            <person name="Dong M."/>
            <person name="Chen S."/>
            <person name="Xu A.-L."/>
        </authorList>
    </citation>
    <scope>NUCLEOTIDE SEQUENCE [MRNA]</scope>
    <source>
        <tissue>Venom duct</tissue>
    </source>
</reference>
<reference key="3">
    <citation type="submission" date="1999-08" db="EMBL/GenBank/DDBJ databases">
        <title>Molecular evolution of four-loop conotoxin precursors from fish-eating Conus.</title>
        <authorList>
            <person name="Duda T.F."/>
            <person name="Palumbi S.R."/>
        </authorList>
    </citation>
    <scope>NUCLEOTIDE SEQUENCE [GENOMIC DNA] OF 6-72</scope>
</reference>
<dbReference type="EMBL" id="AJ851171">
    <property type="protein sequence ID" value="CAH64844.1"/>
    <property type="molecule type" value="mRNA"/>
</dbReference>
<dbReference type="EMBL" id="AF174252">
    <property type="protein sequence ID" value="AAF89916.1"/>
    <property type="molecule type" value="Genomic_DNA"/>
</dbReference>
<dbReference type="EMBL" id="AF174249">
    <property type="protein sequence ID" value="AAF89913.1"/>
    <property type="molecule type" value="Genomic_DNA"/>
</dbReference>
<dbReference type="EMBL" id="AF174250">
    <property type="protein sequence ID" value="AAF89914.1"/>
    <property type="molecule type" value="Genomic_DNA"/>
</dbReference>
<dbReference type="SMR" id="Q5K0D7"/>
<dbReference type="ConoServer" id="1060">
    <property type="toxin name" value="Conotoxin-3 precursor"/>
</dbReference>
<dbReference type="GO" id="GO:0005576">
    <property type="term" value="C:extracellular region"/>
    <property type="evidence" value="ECO:0007669"/>
    <property type="project" value="UniProtKB-SubCell"/>
</dbReference>
<dbReference type="GO" id="GO:0008200">
    <property type="term" value="F:ion channel inhibitor activity"/>
    <property type="evidence" value="ECO:0007669"/>
    <property type="project" value="InterPro"/>
</dbReference>
<dbReference type="GO" id="GO:0090729">
    <property type="term" value="F:toxin activity"/>
    <property type="evidence" value="ECO:0007669"/>
    <property type="project" value="UniProtKB-KW"/>
</dbReference>
<dbReference type="InterPro" id="IPR004214">
    <property type="entry name" value="Conotoxin"/>
</dbReference>
<dbReference type="Pfam" id="PF02950">
    <property type="entry name" value="Conotoxin"/>
    <property type="match status" value="1"/>
</dbReference>
<evidence type="ECO:0000250" key="1"/>
<evidence type="ECO:0000255" key="2"/>
<evidence type="ECO:0000305" key="3"/>
<feature type="signal peptide" evidence="2">
    <location>
        <begin position="1"/>
        <end position="22"/>
    </location>
</feature>
<feature type="propeptide" id="PRO_0000034995" evidence="1">
    <location>
        <begin position="23"/>
        <end position="46"/>
    </location>
</feature>
<feature type="peptide" id="PRO_0000034996" description="Conotoxin 3">
    <location>
        <begin position="47"/>
        <end position="72"/>
    </location>
</feature>
<feature type="disulfide bond" evidence="1">
    <location>
        <begin position="47"/>
        <end position="61"/>
    </location>
</feature>
<feature type="disulfide bond" evidence="1">
    <location>
        <begin position="54"/>
        <end position="64"/>
    </location>
</feature>
<feature type="disulfide bond" evidence="1">
    <location>
        <begin position="60"/>
        <end position="71"/>
    </location>
</feature>
<accession>Q5K0D7</accession>
<accession>Q9N646</accession>
<name>O163_CONST</name>
<proteinExistence type="evidence at transcript level"/>
<organism>
    <name type="scientific">Conus striatus</name>
    <name type="common">Striated cone</name>
    <dbReference type="NCBI Taxonomy" id="6493"/>
    <lineage>
        <taxon>Eukaryota</taxon>
        <taxon>Metazoa</taxon>
        <taxon>Spiralia</taxon>
        <taxon>Lophotrochozoa</taxon>
        <taxon>Mollusca</taxon>
        <taxon>Gastropoda</taxon>
        <taxon>Caenogastropoda</taxon>
        <taxon>Neogastropoda</taxon>
        <taxon>Conoidea</taxon>
        <taxon>Conidae</taxon>
        <taxon>Conus</taxon>
        <taxon>Pionoconus</taxon>
    </lineage>
</organism>
<protein>
    <recommendedName>
        <fullName>Conotoxin 3</fullName>
    </recommendedName>
    <alternativeName>
        <fullName>S6.9</fullName>
    </alternativeName>
</protein>
<keyword id="KW-1015">Disulfide bond</keyword>
<keyword id="KW-0960">Knottin</keyword>
<keyword id="KW-0964">Secreted</keyword>
<keyword id="KW-0732">Signal</keyword>
<keyword id="KW-0800">Toxin</keyword>